<sequence length="408" mass="44909">MDKLLERFLNYVSLDTQSKAGVRQVPSTEGQWKLLHLLKEQLEEMGLINVTLSEKGTLMATLPANVPGDIPAIGFISHVDTSPDCSGKNVNPQIVENYRGGDIALGIGDEVLSPVMFPVLHQLLGQTLITTDGKTLLGADDKAGIAEIMTALAVLQQKNIPHGDIRVAFTPDEEVGKGAKHFDVDAFDARWAYTVDGGGVGELEFENFNAASVNIKIVGNNVHPGTAKGVMVNALSLAARIHAEVPADESPEMTEGYEGFYHLASMKGTVERADMHYIIRDFDRKQFEARKRKMMEIAKKVGKGLHPDCYIELVIEDSYYNMREKVVEHPHILDIAQQAMRDCDIEPELKPIRGGTDGAQLSFMGLPCPNLFTGGYNYHGKHEFVTLEGMEKAVQVIVRIAELTAQRK</sequence>
<accession>P65803</accession>
<accession>Q8X777</accession>
<keyword id="KW-0031">Aminopeptidase</keyword>
<keyword id="KW-0963">Cytoplasm</keyword>
<keyword id="KW-0378">Hydrolase</keyword>
<keyword id="KW-0479">Metal-binding</keyword>
<keyword id="KW-0482">Metalloprotease</keyword>
<keyword id="KW-0645">Protease</keyword>
<keyword id="KW-1185">Reference proteome</keyword>
<keyword id="KW-0862">Zinc</keyword>
<reference key="1">
    <citation type="journal article" date="2002" name="Proc. Natl. Acad. Sci. U.S.A.">
        <title>Extensive mosaic structure revealed by the complete genome sequence of uropathogenic Escherichia coli.</title>
        <authorList>
            <person name="Welch R.A."/>
            <person name="Burland V."/>
            <person name="Plunkett G. III"/>
            <person name="Redford P."/>
            <person name="Roesch P."/>
            <person name="Rasko D."/>
            <person name="Buckles E.L."/>
            <person name="Liou S.-R."/>
            <person name="Boutin A."/>
            <person name="Hackett J."/>
            <person name="Stroud D."/>
            <person name="Mayhew G.F."/>
            <person name="Rose D.J."/>
            <person name="Zhou S."/>
            <person name="Schwartz D.C."/>
            <person name="Perna N.T."/>
            <person name="Mobley H.L.T."/>
            <person name="Donnenberg M.S."/>
            <person name="Blattner F.R."/>
        </authorList>
    </citation>
    <scope>NUCLEOTIDE SEQUENCE [LARGE SCALE GENOMIC DNA]</scope>
    <source>
        <strain>CFT073 / ATCC 700928 / UPEC</strain>
    </source>
</reference>
<evidence type="ECO:0000255" key="1">
    <source>
        <dbReference type="HAMAP-Rule" id="MF_00550"/>
    </source>
</evidence>
<evidence type="ECO:0000305" key="2"/>
<name>PEPT_ECOL6</name>
<comment type="function">
    <text evidence="1">Cleaves the N-terminal amino acid of tripeptides.</text>
</comment>
<comment type="catalytic activity">
    <reaction evidence="1">
        <text>Release of the N-terminal residue from a tripeptide.</text>
        <dbReference type="EC" id="3.4.11.4"/>
    </reaction>
</comment>
<comment type="cofactor">
    <cofactor evidence="1">
        <name>Zn(2+)</name>
        <dbReference type="ChEBI" id="CHEBI:29105"/>
    </cofactor>
    <text evidence="1">Binds 2 Zn(2+) ions per subunit.</text>
</comment>
<comment type="subcellular location">
    <subcellularLocation>
        <location evidence="1">Cytoplasm</location>
    </subcellularLocation>
</comment>
<comment type="similarity">
    <text evidence="1">Belongs to the peptidase M20B family.</text>
</comment>
<comment type="sequence caution" evidence="2">
    <conflict type="erroneous initiation">
        <sequence resource="EMBL-CDS" id="AAN79948"/>
    </conflict>
</comment>
<organism>
    <name type="scientific">Escherichia coli O6:H1 (strain CFT073 / ATCC 700928 / UPEC)</name>
    <dbReference type="NCBI Taxonomy" id="199310"/>
    <lineage>
        <taxon>Bacteria</taxon>
        <taxon>Pseudomonadati</taxon>
        <taxon>Pseudomonadota</taxon>
        <taxon>Gammaproteobacteria</taxon>
        <taxon>Enterobacterales</taxon>
        <taxon>Enterobacteriaceae</taxon>
        <taxon>Escherichia</taxon>
    </lineage>
</organism>
<protein>
    <recommendedName>
        <fullName evidence="1">Peptidase T</fullName>
        <ecNumber evidence="1">3.4.11.4</ecNumber>
    </recommendedName>
    <alternativeName>
        <fullName evidence="1">Aminotripeptidase</fullName>
        <shortName evidence="1">Tripeptidase</shortName>
    </alternativeName>
    <alternativeName>
        <fullName evidence="1">Tripeptide aminopeptidase</fullName>
    </alternativeName>
</protein>
<feature type="chain" id="PRO_0000185294" description="Peptidase T">
    <location>
        <begin position="1"/>
        <end position="408"/>
    </location>
</feature>
<feature type="active site" evidence="1">
    <location>
        <position position="80"/>
    </location>
</feature>
<feature type="active site" description="Proton acceptor" evidence="1">
    <location>
        <position position="173"/>
    </location>
</feature>
<feature type="binding site" evidence="1">
    <location>
        <position position="78"/>
    </location>
    <ligand>
        <name>Zn(2+)</name>
        <dbReference type="ChEBI" id="CHEBI:29105"/>
        <label>1</label>
    </ligand>
</feature>
<feature type="binding site" evidence="1">
    <location>
        <position position="140"/>
    </location>
    <ligand>
        <name>Zn(2+)</name>
        <dbReference type="ChEBI" id="CHEBI:29105"/>
        <label>1</label>
    </ligand>
</feature>
<feature type="binding site" evidence="1">
    <location>
        <position position="140"/>
    </location>
    <ligand>
        <name>Zn(2+)</name>
        <dbReference type="ChEBI" id="CHEBI:29105"/>
        <label>2</label>
    </ligand>
</feature>
<feature type="binding site" evidence="1">
    <location>
        <position position="174"/>
    </location>
    <ligand>
        <name>Zn(2+)</name>
        <dbReference type="ChEBI" id="CHEBI:29105"/>
        <label>2</label>
    </ligand>
</feature>
<feature type="binding site" evidence="1">
    <location>
        <position position="196"/>
    </location>
    <ligand>
        <name>Zn(2+)</name>
        <dbReference type="ChEBI" id="CHEBI:29105"/>
        <label>1</label>
    </ligand>
</feature>
<feature type="binding site" evidence="1">
    <location>
        <position position="379"/>
    </location>
    <ligand>
        <name>Zn(2+)</name>
        <dbReference type="ChEBI" id="CHEBI:29105"/>
        <label>2</label>
    </ligand>
</feature>
<gene>
    <name evidence="1" type="primary">pepT</name>
    <name type="ordered locus">c1479</name>
</gene>
<dbReference type="EC" id="3.4.11.4" evidence="1"/>
<dbReference type="EMBL" id="AE014075">
    <property type="protein sequence ID" value="AAN79948.1"/>
    <property type="status" value="ALT_INIT"/>
    <property type="molecule type" value="Genomic_DNA"/>
</dbReference>
<dbReference type="RefSeq" id="WP_000359446.1">
    <property type="nucleotide sequence ID" value="NZ_CP051263.1"/>
</dbReference>
<dbReference type="SMR" id="P65803"/>
<dbReference type="STRING" id="199310.c1479"/>
<dbReference type="MEROPS" id="M20.003"/>
<dbReference type="GeneID" id="93776283"/>
<dbReference type="KEGG" id="ecc:c1479"/>
<dbReference type="eggNOG" id="COG2195">
    <property type="taxonomic scope" value="Bacteria"/>
</dbReference>
<dbReference type="HOGENOM" id="CLU_053676_0_0_6"/>
<dbReference type="Proteomes" id="UP000001410">
    <property type="component" value="Chromosome"/>
</dbReference>
<dbReference type="GO" id="GO:0005829">
    <property type="term" value="C:cytosol"/>
    <property type="evidence" value="ECO:0007669"/>
    <property type="project" value="TreeGrafter"/>
</dbReference>
<dbReference type="GO" id="GO:0008237">
    <property type="term" value="F:metallopeptidase activity"/>
    <property type="evidence" value="ECO:0007669"/>
    <property type="project" value="UniProtKB-KW"/>
</dbReference>
<dbReference type="GO" id="GO:0045148">
    <property type="term" value="F:tripeptide aminopeptidase activity"/>
    <property type="evidence" value="ECO:0007669"/>
    <property type="project" value="UniProtKB-UniRule"/>
</dbReference>
<dbReference type="GO" id="GO:0008270">
    <property type="term" value="F:zinc ion binding"/>
    <property type="evidence" value="ECO:0007669"/>
    <property type="project" value="UniProtKB-UniRule"/>
</dbReference>
<dbReference type="GO" id="GO:0043171">
    <property type="term" value="P:peptide catabolic process"/>
    <property type="evidence" value="ECO:0007669"/>
    <property type="project" value="UniProtKB-UniRule"/>
</dbReference>
<dbReference type="GO" id="GO:0006508">
    <property type="term" value="P:proteolysis"/>
    <property type="evidence" value="ECO:0007669"/>
    <property type="project" value="UniProtKB-UniRule"/>
</dbReference>
<dbReference type="CDD" id="cd03892">
    <property type="entry name" value="M20_peptT"/>
    <property type="match status" value="1"/>
</dbReference>
<dbReference type="FunFam" id="3.30.70.360:FF:000002">
    <property type="entry name" value="Peptidase T"/>
    <property type="match status" value="1"/>
</dbReference>
<dbReference type="Gene3D" id="3.30.70.360">
    <property type="match status" value="1"/>
</dbReference>
<dbReference type="Gene3D" id="3.40.630.10">
    <property type="entry name" value="Zn peptidases"/>
    <property type="match status" value="1"/>
</dbReference>
<dbReference type="HAMAP" id="MF_00550">
    <property type="entry name" value="Aminopeptidase_M20"/>
    <property type="match status" value="1"/>
</dbReference>
<dbReference type="InterPro" id="IPR001261">
    <property type="entry name" value="ArgE/DapE_CS"/>
</dbReference>
<dbReference type="InterPro" id="IPR036264">
    <property type="entry name" value="Bact_exopeptidase_dim_dom"/>
</dbReference>
<dbReference type="InterPro" id="IPR002933">
    <property type="entry name" value="Peptidase_M20"/>
</dbReference>
<dbReference type="InterPro" id="IPR011650">
    <property type="entry name" value="Peptidase_M20_dimer"/>
</dbReference>
<dbReference type="InterPro" id="IPR010161">
    <property type="entry name" value="Peptidase_M20B"/>
</dbReference>
<dbReference type="NCBIfam" id="TIGR01882">
    <property type="entry name" value="peptidase-T"/>
    <property type="match status" value="1"/>
</dbReference>
<dbReference type="NCBIfam" id="NF003976">
    <property type="entry name" value="PRK05469.1"/>
    <property type="match status" value="1"/>
</dbReference>
<dbReference type="NCBIfam" id="NF009920">
    <property type="entry name" value="PRK13381.1"/>
    <property type="match status" value="1"/>
</dbReference>
<dbReference type="PANTHER" id="PTHR42994">
    <property type="entry name" value="PEPTIDASE T"/>
    <property type="match status" value="1"/>
</dbReference>
<dbReference type="PANTHER" id="PTHR42994:SF1">
    <property type="entry name" value="PEPTIDASE T"/>
    <property type="match status" value="1"/>
</dbReference>
<dbReference type="Pfam" id="PF07687">
    <property type="entry name" value="M20_dimer"/>
    <property type="match status" value="1"/>
</dbReference>
<dbReference type="Pfam" id="PF01546">
    <property type="entry name" value="Peptidase_M20"/>
    <property type="match status" value="1"/>
</dbReference>
<dbReference type="PIRSF" id="PIRSF037215">
    <property type="entry name" value="Peptidase_M20B"/>
    <property type="match status" value="1"/>
</dbReference>
<dbReference type="SUPFAM" id="SSF55031">
    <property type="entry name" value="Bacterial exopeptidase dimerisation domain"/>
    <property type="match status" value="1"/>
</dbReference>
<dbReference type="SUPFAM" id="SSF53187">
    <property type="entry name" value="Zn-dependent exopeptidases"/>
    <property type="match status" value="1"/>
</dbReference>
<dbReference type="PROSITE" id="PS00758">
    <property type="entry name" value="ARGE_DAPE_CPG2_1"/>
    <property type="match status" value="1"/>
</dbReference>
<dbReference type="PROSITE" id="PS00759">
    <property type="entry name" value="ARGE_DAPE_CPG2_2"/>
    <property type="match status" value="1"/>
</dbReference>
<proteinExistence type="inferred from homology"/>